<reference key="1">
    <citation type="submission" date="2006-10" db="EMBL/GenBank/DDBJ databases">
        <title>Molecular cloning and characterization of prostaglandin E synthase (PGES) in canine corpus luteum.</title>
        <authorList>
            <person name="Kowalewski M.P."/>
            <person name="Hoffmann B."/>
        </authorList>
    </citation>
    <scope>NUCLEOTIDE SEQUENCE [MRNA]</scope>
</reference>
<evidence type="ECO:0000250" key="1">
    <source>
        <dbReference type="UniProtKB" id="O14684"/>
    </source>
</evidence>
<evidence type="ECO:0000250" key="2">
    <source>
        <dbReference type="UniProtKB" id="Q9JM51"/>
    </source>
</evidence>
<evidence type="ECO:0000305" key="3"/>
<gene>
    <name type="primary">PTGES</name>
    <name type="synonym">PGES</name>
</gene>
<proteinExistence type="evidence at transcript level"/>
<sequence>MPPPVLALVSGQALPAFLLCSTLLVIKMYVVAVITGQVRLRKKAFANPEDALRHGGLQYCRSDQDVDRCLRAHRNDMETIYPFLFLGFVYSFLGPDPFIAQMHFLVFFLGRMVHTVAYLGKLRAPTRSLAYTVAQLPCASMALQIVWEAACHL</sequence>
<accession>A0SYQ0</accession>
<protein>
    <recommendedName>
        <fullName>Prostaglandin E synthase</fullName>
        <ecNumber evidence="1">5.3.99.3</ecNumber>
    </recommendedName>
    <alternativeName>
        <fullName>Glutathione peroxidase PTGES</fullName>
        <ecNumber evidence="1">1.11.1.-</ecNumber>
    </alternativeName>
    <alternativeName>
        <fullName>Glutathione transferase PTGES</fullName>
        <ecNumber evidence="1">2.5.1.18</ecNumber>
    </alternativeName>
    <alternativeName>
        <fullName>Microsomal prostaglandin E synthase 1</fullName>
        <shortName>MPGES-1</shortName>
    </alternativeName>
</protein>
<dbReference type="EC" id="5.3.99.3" evidence="1"/>
<dbReference type="EC" id="1.11.1.-" evidence="1"/>
<dbReference type="EC" id="2.5.1.18" evidence="1"/>
<dbReference type="EMBL" id="EF063141">
    <property type="protein sequence ID" value="ABK59963.1"/>
    <property type="molecule type" value="mRNA"/>
</dbReference>
<dbReference type="RefSeq" id="NP_001116326.1">
    <property type="nucleotide sequence ID" value="NM_001122854.1"/>
</dbReference>
<dbReference type="SMR" id="A0SYQ0"/>
<dbReference type="FunCoup" id="A0SYQ0">
    <property type="interactions" value="1"/>
</dbReference>
<dbReference type="STRING" id="9615.ENSCAFP00000040771"/>
<dbReference type="BindingDB" id="A0SYQ0"/>
<dbReference type="ChEMBL" id="CHEMBL3341581"/>
<dbReference type="PaxDb" id="9612-ENSCAFP00000040771"/>
<dbReference type="Ensembl" id="ENSCAFT00000044497.3">
    <property type="protein sequence ID" value="ENSCAFP00000040771.1"/>
    <property type="gene ID" value="ENSCAFG00000030838.3"/>
</dbReference>
<dbReference type="Ensembl" id="ENSCAFT00030013175.1">
    <property type="protein sequence ID" value="ENSCAFP00030011517.1"/>
    <property type="gene ID" value="ENSCAFG00030007173.1"/>
</dbReference>
<dbReference type="Ensembl" id="ENSCAFT00040011106.1">
    <property type="protein sequence ID" value="ENSCAFP00040009614.1"/>
    <property type="gene ID" value="ENSCAFG00040005943.1"/>
</dbReference>
<dbReference type="Ensembl" id="ENSCAFT00845041265.1">
    <property type="protein sequence ID" value="ENSCAFP00845032348.1"/>
    <property type="gene ID" value="ENSCAFG00845023377.1"/>
</dbReference>
<dbReference type="GeneID" id="480698"/>
<dbReference type="KEGG" id="cfa:480698"/>
<dbReference type="CTD" id="9536"/>
<dbReference type="VEuPathDB" id="HostDB:ENSCAFG00845023377"/>
<dbReference type="VGNC" id="VGNC:45145">
    <property type="gene designation" value="PTGES"/>
</dbReference>
<dbReference type="eggNOG" id="ENOG502RZBK">
    <property type="taxonomic scope" value="Eukaryota"/>
</dbReference>
<dbReference type="GeneTree" id="ENSGT00390000011980"/>
<dbReference type="HOGENOM" id="CLU_105467_1_1_1"/>
<dbReference type="InParanoid" id="A0SYQ0"/>
<dbReference type="OMA" id="TIAQIPC"/>
<dbReference type="OrthoDB" id="193139at2759"/>
<dbReference type="TreeFam" id="TF105327"/>
<dbReference type="Reactome" id="R-CFA-2162123">
    <property type="pathway name" value="Synthesis of Prostaglandins (PG) and Thromboxanes (TX)"/>
</dbReference>
<dbReference type="UniPathway" id="UPA00662"/>
<dbReference type="Proteomes" id="UP000002254">
    <property type="component" value="Chromosome 9"/>
</dbReference>
<dbReference type="Proteomes" id="UP000694429">
    <property type="component" value="Chromosome 9"/>
</dbReference>
<dbReference type="Proteomes" id="UP000694542">
    <property type="component" value="Chromosome 9"/>
</dbReference>
<dbReference type="Proteomes" id="UP000805418">
    <property type="component" value="Chromosome 9"/>
</dbReference>
<dbReference type="Bgee" id="ENSCAFG00000030838">
    <property type="expression patterns" value="Expressed in placenta and 49 other cell types or tissues"/>
</dbReference>
<dbReference type="GO" id="GO:0016020">
    <property type="term" value="C:membrane"/>
    <property type="evidence" value="ECO:0000250"/>
    <property type="project" value="UniProtKB"/>
</dbReference>
<dbReference type="GO" id="GO:0005641">
    <property type="term" value="C:nuclear envelope lumen"/>
    <property type="evidence" value="ECO:0007669"/>
    <property type="project" value="Ensembl"/>
</dbReference>
<dbReference type="GO" id="GO:0048471">
    <property type="term" value="C:perinuclear region of cytoplasm"/>
    <property type="evidence" value="ECO:0007669"/>
    <property type="project" value="UniProtKB-SubCell"/>
</dbReference>
<dbReference type="GO" id="GO:0043295">
    <property type="term" value="F:glutathione binding"/>
    <property type="evidence" value="ECO:0000250"/>
    <property type="project" value="UniProtKB"/>
</dbReference>
<dbReference type="GO" id="GO:0004602">
    <property type="term" value="F:glutathione peroxidase activity"/>
    <property type="evidence" value="ECO:0000250"/>
    <property type="project" value="UniProtKB"/>
</dbReference>
<dbReference type="GO" id="GO:0004364">
    <property type="term" value="F:glutathione transferase activity"/>
    <property type="evidence" value="ECO:0000250"/>
    <property type="project" value="UniProtKB"/>
</dbReference>
<dbReference type="GO" id="GO:0004667">
    <property type="term" value="F:prostaglandin-D synthase activity"/>
    <property type="evidence" value="ECO:0007669"/>
    <property type="project" value="Ensembl"/>
</dbReference>
<dbReference type="GO" id="GO:0050220">
    <property type="term" value="F:prostaglandin-E synthase activity"/>
    <property type="evidence" value="ECO:0000250"/>
    <property type="project" value="UniProtKB"/>
</dbReference>
<dbReference type="GO" id="GO:0008283">
    <property type="term" value="P:cell population proliferation"/>
    <property type="evidence" value="ECO:0007669"/>
    <property type="project" value="Ensembl"/>
</dbReference>
<dbReference type="GO" id="GO:0008285">
    <property type="term" value="P:negative regulation of cell population proliferation"/>
    <property type="evidence" value="ECO:0007669"/>
    <property type="project" value="Ensembl"/>
</dbReference>
<dbReference type="GO" id="GO:0032308">
    <property type="term" value="P:positive regulation of prostaglandin secretion"/>
    <property type="evidence" value="ECO:0007669"/>
    <property type="project" value="Ensembl"/>
</dbReference>
<dbReference type="GO" id="GO:0001516">
    <property type="term" value="P:prostaglandin biosynthetic process"/>
    <property type="evidence" value="ECO:0000250"/>
    <property type="project" value="UniProtKB"/>
</dbReference>
<dbReference type="GO" id="GO:0031620">
    <property type="term" value="P:regulation of fever generation"/>
    <property type="evidence" value="ECO:0007669"/>
    <property type="project" value="Ensembl"/>
</dbReference>
<dbReference type="GO" id="GO:0050727">
    <property type="term" value="P:regulation of inflammatory response"/>
    <property type="evidence" value="ECO:0000250"/>
    <property type="project" value="UniProtKB"/>
</dbReference>
<dbReference type="GO" id="GO:0019233">
    <property type="term" value="P:sensory perception of pain"/>
    <property type="evidence" value="ECO:0007669"/>
    <property type="project" value="Ensembl"/>
</dbReference>
<dbReference type="FunFam" id="1.20.120.550:FF:000002">
    <property type="entry name" value="Microsomal glutathione S-transferase 1"/>
    <property type="match status" value="1"/>
</dbReference>
<dbReference type="Gene3D" id="1.20.120.550">
    <property type="entry name" value="Membrane associated eicosanoid/glutathione metabolism-like domain"/>
    <property type="match status" value="1"/>
</dbReference>
<dbReference type="InterPro" id="IPR023352">
    <property type="entry name" value="MAPEG-like_dom_sf"/>
</dbReference>
<dbReference type="InterPro" id="IPR001129">
    <property type="entry name" value="Membr-assoc_MAPEG"/>
</dbReference>
<dbReference type="InterPro" id="IPR040162">
    <property type="entry name" value="MGST1-like"/>
</dbReference>
<dbReference type="PANTHER" id="PTHR10689">
    <property type="entry name" value="MICROSOMAL GLUTATHIONE S-TRANSFERASE 1"/>
    <property type="match status" value="1"/>
</dbReference>
<dbReference type="PANTHER" id="PTHR10689:SF9">
    <property type="entry name" value="PROSTAGLANDIN E SYNTHASE"/>
    <property type="match status" value="1"/>
</dbReference>
<dbReference type="Pfam" id="PF01124">
    <property type="entry name" value="MAPEG"/>
    <property type="match status" value="1"/>
</dbReference>
<dbReference type="SUPFAM" id="SSF161084">
    <property type="entry name" value="MAPEG domain-like"/>
    <property type="match status" value="1"/>
</dbReference>
<organism>
    <name type="scientific">Canis lupus familiaris</name>
    <name type="common">Dog</name>
    <name type="synonym">Canis familiaris</name>
    <dbReference type="NCBI Taxonomy" id="9615"/>
    <lineage>
        <taxon>Eukaryota</taxon>
        <taxon>Metazoa</taxon>
        <taxon>Chordata</taxon>
        <taxon>Craniata</taxon>
        <taxon>Vertebrata</taxon>
        <taxon>Euteleostomi</taxon>
        <taxon>Mammalia</taxon>
        <taxon>Eutheria</taxon>
        <taxon>Laurasiatheria</taxon>
        <taxon>Carnivora</taxon>
        <taxon>Caniformia</taxon>
        <taxon>Canidae</taxon>
        <taxon>Canis</taxon>
    </lineage>
</organism>
<feature type="chain" id="PRO_0000289555" description="Prostaglandin E synthase">
    <location>
        <begin position="1"/>
        <end position="153"/>
    </location>
</feature>
<feature type="topological domain" description="Lumenal" evidence="1">
    <location>
        <begin position="1"/>
        <end position="13"/>
    </location>
</feature>
<feature type="transmembrane region" description="Helical" evidence="1">
    <location>
        <begin position="14"/>
        <end position="42"/>
    </location>
</feature>
<feature type="topological domain" description="Cytoplasmic" evidence="1">
    <location>
        <begin position="43"/>
        <end position="61"/>
    </location>
</feature>
<feature type="transmembrane region" description="Helical" evidence="1">
    <location>
        <begin position="62"/>
        <end position="91"/>
    </location>
</feature>
<feature type="topological domain" description="Lumenal" evidence="1">
    <location>
        <begin position="92"/>
        <end position="96"/>
    </location>
</feature>
<feature type="transmembrane region" description="Helical" evidence="1">
    <location>
        <begin position="97"/>
        <end position="120"/>
    </location>
</feature>
<feature type="topological domain" description="Cytoplasmic" evidence="1">
    <location>
        <begin position="121"/>
        <end position="124"/>
    </location>
</feature>
<feature type="transmembrane region" description="Helical" evidence="1">
    <location>
        <begin position="125"/>
        <end position="153"/>
    </location>
</feature>
<feature type="binding site" evidence="1">
    <location>
        <position position="39"/>
    </location>
    <ligand>
        <name>glutathione</name>
        <dbReference type="ChEBI" id="CHEBI:57925"/>
    </ligand>
</feature>
<feature type="binding site" evidence="1">
    <location>
        <begin position="74"/>
        <end position="78"/>
    </location>
    <ligand>
        <name>glutathione</name>
        <dbReference type="ChEBI" id="CHEBI:57925"/>
    </ligand>
</feature>
<feature type="binding site" evidence="1">
    <location>
        <position position="114"/>
    </location>
    <ligand>
        <name>glutathione</name>
        <dbReference type="ChEBI" id="CHEBI:57925"/>
    </ligand>
</feature>
<feature type="binding site" evidence="1">
    <location>
        <position position="118"/>
    </location>
    <ligand>
        <name>glutathione</name>
        <dbReference type="ChEBI" id="CHEBI:57925"/>
    </ligand>
</feature>
<feature type="binding site" evidence="1">
    <location>
        <begin position="127"/>
        <end position="131"/>
    </location>
    <ligand>
        <name>glutathione</name>
        <dbReference type="ChEBI" id="CHEBI:57925"/>
    </ligand>
</feature>
<feature type="site" description="Essential for protaglandin-E synthase activity" evidence="1">
    <location>
        <position position="50"/>
    </location>
</feature>
<feature type="site" description="Essential for protaglandin-E synthase activity" evidence="1">
    <location>
        <position position="127"/>
    </location>
</feature>
<comment type="function">
    <text evidence="1 2">Terminal enzyme of the cyclooxygenase (COX)-2-mediated prostaglandin E2 (PGE2) biosynthetic pathway. Catalyzes the glutathione-dependent oxidoreduction of prostaglandin endoperoxide H2 (PGH2) to prostaglandin E2 (PGE2) in response to inflammatory stimuli (By similarity). Plays a key role in inflammation response, fever and pain (By similarity). Also catalyzes the oxidoreduction of endocannabinoids into prostaglandin glycerol esters and PGG2 into 15-hydroperoxy-PGE2. In addition, displays low glutathione transferase and glutathione-dependent peroxidase activities, toward 1-chloro-2,4-dinitrobenzene and 5-hydroperoxyicosatetraenoic acid (5-HPETE), respectively (By similarity).</text>
</comment>
<comment type="catalytic activity">
    <reaction evidence="1">
        <text>prostaglandin H2 = prostaglandin E2</text>
        <dbReference type="Rhea" id="RHEA:12893"/>
        <dbReference type="ChEBI" id="CHEBI:57405"/>
        <dbReference type="ChEBI" id="CHEBI:606564"/>
        <dbReference type="EC" id="5.3.99.3"/>
    </reaction>
    <physiologicalReaction direction="left-to-right" evidence="1">
        <dbReference type="Rhea" id="RHEA:12894"/>
    </physiologicalReaction>
</comment>
<comment type="catalytic activity">
    <reaction evidence="1">
        <text>2-glyceryl-prostaglandin H2 = 2-glyceryl-prostaglandin E2</text>
        <dbReference type="Rhea" id="RHEA:53324"/>
        <dbReference type="ChEBI" id="CHEBI:85166"/>
        <dbReference type="ChEBI" id="CHEBI:137172"/>
    </reaction>
    <physiologicalReaction direction="left-to-right" evidence="1">
        <dbReference type="Rhea" id="RHEA:53325"/>
    </physiologicalReaction>
</comment>
<comment type="catalytic activity">
    <reaction evidence="1">
        <text>prostaglandin G2 = (15S)-15-hydroperoxy-prostaglandin E2</text>
        <dbReference type="Rhea" id="RHEA:64364"/>
        <dbReference type="ChEBI" id="CHEBI:82629"/>
        <dbReference type="ChEBI" id="CHEBI:152564"/>
    </reaction>
    <physiologicalReaction direction="left-to-right" evidence="1">
        <dbReference type="Rhea" id="RHEA:64365"/>
    </physiologicalReaction>
</comment>
<comment type="catalytic activity">
    <reaction evidence="1">
        <text>1-chloro-2,4-dinitrobenzene + glutathione = 2,4-dinitrophenyl-S-glutathione + chloride + H(+)</text>
        <dbReference type="Rhea" id="RHEA:51220"/>
        <dbReference type="ChEBI" id="CHEBI:15378"/>
        <dbReference type="ChEBI" id="CHEBI:17996"/>
        <dbReference type="ChEBI" id="CHEBI:34718"/>
        <dbReference type="ChEBI" id="CHEBI:57925"/>
        <dbReference type="ChEBI" id="CHEBI:133977"/>
        <dbReference type="EC" id="2.5.1.18"/>
    </reaction>
</comment>
<comment type="catalytic activity">
    <reaction evidence="1">
        <text>(5S)-hydroperoxy-(6E,8Z,11Z,14Z)-eicosatetraenoate + 2 glutathione = (5S)-hydroxy-(6E,8Z,11Z,14Z)-eicosatetraenoate + glutathione disulfide + H2O</text>
        <dbReference type="Rhea" id="RHEA:48620"/>
        <dbReference type="ChEBI" id="CHEBI:15377"/>
        <dbReference type="ChEBI" id="CHEBI:57450"/>
        <dbReference type="ChEBI" id="CHEBI:57925"/>
        <dbReference type="ChEBI" id="CHEBI:58297"/>
        <dbReference type="ChEBI" id="CHEBI:90632"/>
    </reaction>
</comment>
<comment type="cofactor">
    <cofactor evidence="1">
        <name>glutathione</name>
        <dbReference type="ChEBI" id="CHEBI:57925"/>
    </cofactor>
</comment>
<comment type="pathway">
    <text evidence="1">Lipid metabolism; prostaglandin biosynthesis.</text>
</comment>
<comment type="subunit">
    <text evidence="1">Homotrimer.</text>
</comment>
<comment type="subcellular location">
    <subcellularLocation>
        <location evidence="1">Membrane</location>
        <topology evidence="1">Multi-pass membrane protein</topology>
    </subcellularLocation>
    <subcellularLocation>
        <location evidence="1">Cytoplasm</location>
        <location evidence="1">Perinuclear region</location>
    </subcellularLocation>
    <text evidence="1">Colocalizes with PTGS1/COX-1 and PTGS2/COX-2 in the perinuclear compartment.</text>
</comment>
<comment type="similarity">
    <text evidence="3">Belongs to the MAPEG family.</text>
</comment>
<name>PTGES_CANLF</name>
<keyword id="KW-0963">Cytoplasm</keyword>
<keyword id="KW-0275">Fatty acid biosynthesis</keyword>
<keyword id="KW-0276">Fatty acid metabolism</keyword>
<keyword id="KW-0413">Isomerase</keyword>
<keyword id="KW-0444">Lipid biosynthesis</keyword>
<keyword id="KW-0443">Lipid metabolism</keyword>
<keyword id="KW-0472">Membrane</keyword>
<keyword id="KW-0560">Oxidoreductase</keyword>
<keyword id="KW-0643">Prostaglandin biosynthesis</keyword>
<keyword id="KW-0644">Prostaglandin metabolism</keyword>
<keyword id="KW-1185">Reference proteome</keyword>
<keyword id="KW-0808">Transferase</keyword>
<keyword id="KW-0812">Transmembrane</keyword>
<keyword id="KW-1133">Transmembrane helix</keyword>